<feature type="chain" id="PRO_0000199960" description="Nitrite reductase [NAD(P)H]">
    <location>
        <begin position="1"/>
        <end position="1176"/>
    </location>
</feature>
<feature type="domain" description="Rieske; atypical" evidence="4">
    <location>
        <begin position="942"/>
        <end position="1094"/>
    </location>
</feature>
<feature type="region of interest" description="Disordered" evidence="5">
    <location>
        <begin position="1"/>
        <end position="23"/>
    </location>
</feature>
<feature type="region of interest" description="Disordered" evidence="5">
    <location>
        <begin position="998"/>
        <end position="1051"/>
    </location>
</feature>
<feature type="region of interest" description="Disordered" evidence="5">
    <location>
        <begin position="1124"/>
        <end position="1157"/>
    </location>
</feature>
<feature type="compositionally biased region" description="Low complexity" evidence="5">
    <location>
        <begin position="10"/>
        <end position="23"/>
    </location>
</feature>
<feature type="compositionally biased region" description="Low complexity" evidence="5">
    <location>
        <begin position="998"/>
        <end position="1008"/>
    </location>
</feature>
<feature type="compositionally biased region" description="Low complexity" evidence="5">
    <location>
        <begin position="1030"/>
        <end position="1049"/>
    </location>
</feature>
<feature type="compositionally biased region" description="Basic and acidic residues" evidence="5">
    <location>
        <begin position="1124"/>
        <end position="1139"/>
    </location>
</feature>
<feature type="binding site" evidence="3">
    <location>
        <begin position="26"/>
        <end position="60"/>
    </location>
    <ligand>
        <name>FAD</name>
        <dbReference type="ChEBI" id="CHEBI:57692"/>
    </ligand>
</feature>
<feature type="binding site" evidence="3">
    <location>
        <begin position="183"/>
        <end position="215"/>
    </location>
    <ligand>
        <name>NAD(+)</name>
        <dbReference type="ChEBI" id="CHEBI:57540"/>
    </ligand>
</feature>
<feature type="binding site" evidence="2">
    <location>
        <position position="496"/>
    </location>
    <ligand>
        <name>[2Fe-2S] cluster</name>
        <dbReference type="ChEBI" id="CHEBI:190135"/>
        <label>1</label>
    </ligand>
</feature>
<feature type="binding site" evidence="2">
    <location>
        <position position="498"/>
    </location>
    <ligand>
        <name>[2Fe-2S] cluster</name>
        <dbReference type="ChEBI" id="CHEBI:190135"/>
        <label>1</label>
    </ligand>
</feature>
<feature type="binding site" evidence="2">
    <location>
        <position position="531"/>
    </location>
    <ligand>
        <name>[2Fe-2S] cluster</name>
        <dbReference type="ChEBI" id="CHEBI:190135"/>
        <label>1</label>
    </ligand>
</feature>
<feature type="binding site" evidence="2">
    <location>
        <position position="534"/>
    </location>
    <ligand>
        <name>[2Fe-2S] cluster</name>
        <dbReference type="ChEBI" id="CHEBI:190135"/>
        <label>1</label>
    </ligand>
</feature>
<feature type="binding site" evidence="1">
    <location>
        <position position="717"/>
    </location>
    <ligand>
        <name>[4Fe-4S] cluster</name>
        <dbReference type="ChEBI" id="CHEBI:49883"/>
    </ligand>
</feature>
<feature type="binding site" evidence="1">
    <location>
        <position position="723"/>
    </location>
    <ligand>
        <name>[4Fe-4S] cluster</name>
        <dbReference type="ChEBI" id="CHEBI:49883"/>
    </ligand>
</feature>
<feature type="binding site" evidence="1">
    <location>
        <position position="757"/>
    </location>
    <ligand>
        <name>[4Fe-4S] cluster</name>
        <dbReference type="ChEBI" id="CHEBI:49883"/>
    </ligand>
</feature>
<feature type="binding site" evidence="1">
    <location>
        <position position="761"/>
    </location>
    <ligand>
        <name>[4Fe-4S] cluster</name>
        <dbReference type="ChEBI" id="CHEBI:49883"/>
    </ligand>
</feature>
<feature type="binding site" description="axial binding residue" evidence="1">
    <location>
        <position position="761"/>
    </location>
    <ligand>
        <name>siroheme</name>
        <dbReference type="ChEBI" id="CHEBI:60052"/>
    </ligand>
    <ligandPart>
        <name>Fe</name>
        <dbReference type="ChEBI" id="CHEBI:18248"/>
    </ligandPart>
</feature>
<feature type="binding site" evidence="4">
    <location>
        <position position="981"/>
    </location>
    <ligand>
        <name>[2Fe-2S] cluster</name>
        <dbReference type="ChEBI" id="CHEBI:190135"/>
        <label>2</label>
    </ligand>
</feature>
<feature type="binding site" evidence="4">
    <location>
        <position position="983"/>
    </location>
    <ligand>
        <name>[2Fe-2S] cluster</name>
        <dbReference type="ChEBI" id="CHEBI:190135"/>
        <label>2</label>
    </ligand>
</feature>
<feature type="binding site" evidence="4">
    <location>
        <position position="1058"/>
    </location>
    <ligand>
        <name>[2Fe-2S] cluster</name>
        <dbReference type="ChEBI" id="CHEBI:190135"/>
        <label>2</label>
    </ligand>
</feature>
<feature type="binding site" evidence="4">
    <location>
        <position position="1061"/>
    </location>
    <ligand>
        <name>[2Fe-2S] cluster</name>
        <dbReference type="ChEBI" id="CHEBI:190135"/>
        <label>2</label>
    </ligand>
</feature>
<feature type="sequence conflict" description="In Ref. 1; L07391." evidence="6" ref="1">
    <original>T</original>
    <variation>S</variation>
    <location>
        <position position="357"/>
    </location>
</feature>
<gene>
    <name type="primary">nit-6</name>
    <name type="ORF">NCU04720</name>
</gene>
<proteinExistence type="evidence at transcript level"/>
<sequence>MANTSLDMASSTSPSPSPESTTTPRKRIVVVGLGMVGIAFIEKLIKLDTQRQYEIVVIGEEPHVAYNRVGLTSFFSHREVEQLYLNPLEWYKQHLQTSSLTHHLSTAALSLSPATKSLTISPPPSTPSLTTLPYDHLILATGSSALLPTSTPGHDASGVFVYRNIADLQSLITWSSDTQIKGSTGVVVGGGLLGLEAAKALMDLQVFGRVVVIERNGWVLSRQVDGEAGALVLEGVRGLGVEVLTRKRVKEVECDESKDEGEKEKKRVKGIRFEDGEYLACSTICFAIGIKARDELAREAGITCAERGGGGIVVDDSLQTSAPDVYAIGECASWKGQTFGLIGPGVEMADVLAFNFTQAHLHTPRVFKRPDLSTKLKLLGVEVASFGDFFADRDGPKELPPKLRRELKKSGGKAEVKALTYKDPFLSVYKKYIFTSDGKYLLGGMMIGDTTDYVRLVPLVKTHKELDVPPSQLILGAKKSGDDNGDDDLPDDTQICSCHNVTKADLVAPLKSGECTSLGDLKSCTKAGTGCGGCMPLVTSIFNRTMASLGTEVKNNLCPHFPEYSRADLYNIISVKRLRTLPDVMREAGADADSLGCEACKPAIASIFASLWNDHVMSPAHHGLQDTNDRFMGNIQRNGTFSVVPRVAAGEITPEKLIVIGEVAKEYNLYTKITGGQRIDMFGAKKQDLLKIWKKLVDAGMESGHAYAKSLRTVKSCVGTTWCRYGVGDSVGMAVRLEERYKGLRGPHKIKGGVSGCTRECAEAGNKDFGLIATEKGFNILICGNGGTTPKHSVLLAKDVPPTNVIPIIDRFLMFYIRTADKLQRTARWLEALPGGIDYLKEVILEDRLGICASLEAQMQELVDSYFDEWAEALNNPAMQERFKQFANTDEGQPPMEVEIDRGQERPVMWPREDEGGSAKADFKGLRDKWSSTTWQPVLEASYFQGADDLPNGISASIKRGDTQLAVWRIKGKYYASQQMCPHKRTFALSDGFVGTDPSPSSCSSSALPPSPPSTPPRSSSPVTSPPQSPTSSATPATTASSSCTTNPSGPASPWISCPFHKRNFSLTSGSCKNDNELSIATFDVEERDDGMVYIKLPPVDELDRELGTKKWMVKKGEAGEGQLRELDELNKSKGVEGKKGRRGRKPGASEAGKEVGKKLVEAVGGGGCGGPGLEW</sequence>
<protein>
    <recommendedName>
        <fullName>Nitrite reductase [NAD(P)H]</fullName>
        <ecNumber>1.7.1.4</ecNumber>
    </recommendedName>
</protein>
<dbReference type="EC" id="1.7.1.4"/>
<dbReference type="EMBL" id="L07391">
    <property type="status" value="NOT_ANNOTATED_CDS"/>
    <property type="molecule type" value="Genomic_DNA"/>
</dbReference>
<dbReference type="EMBL" id="CM002241">
    <property type="protein sequence ID" value="EAA31119.3"/>
    <property type="molecule type" value="Genomic_DNA"/>
</dbReference>
<dbReference type="PIR" id="A49848">
    <property type="entry name" value="A49848"/>
</dbReference>
<dbReference type="RefSeq" id="XP_960355.3">
    <property type="nucleotide sequence ID" value="XM_955262.3"/>
</dbReference>
<dbReference type="SMR" id="P38681"/>
<dbReference type="STRING" id="367110.P38681"/>
<dbReference type="PaxDb" id="5141-EFNCRP00000004474"/>
<dbReference type="EnsemblFungi" id="EAA31119">
    <property type="protein sequence ID" value="EAA31119"/>
    <property type="gene ID" value="NCU04720"/>
</dbReference>
<dbReference type="GeneID" id="3876518"/>
<dbReference type="KEGG" id="ncr:NCU04720"/>
<dbReference type="VEuPathDB" id="FungiDB:NCU04720"/>
<dbReference type="HOGENOM" id="CLU_003291_0_0_1"/>
<dbReference type="InParanoid" id="P38681"/>
<dbReference type="OrthoDB" id="432169at2759"/>
<dbReference type="BioCyc" id="MetaCyc:MONOMER-12533"/>
<dbReference type="UniPathway" id="UPA00653"/>
<dbReference type="Proteomes" id="UP000001805">
    <property type="component" value="Chromosome 5, Linkage Group VI"/>
</dbReference>
<dbReference type="GO" id="GO:0051537">
    <property type="term" value="F:2 iron, 2 sulfur cluster binding"/>
    <property type="evidence" value="ECO:0007669"/>
    <property type="project" value="UniProtKB-KW"/>
</dbReference>
<dbReference type="GO" id="GO:0051539">
    <property type="term" value="F:4 iron, 4 sulfur cluster binding"/>
    <property type="evidence" value="ECO:0007669"/>
    <property type="project" value="UniProtKB-KW"/>
</dbReference>
<dbReference type="GO" id="GO:0050660">
    <property type="term" value="F:flavin adenine dinucleotide binding"/>
    <property type="evidence" value="ECO:0007669"/>
    <property type="project" value="InterPro"/>
</dbReference>
<dbReference type="GO" id="GO:0020037">
    <property type="term" value="F:heme binding"/>
    <property type="evidence" value="ECO:0007669"/>
    <property type="project" value="InterPro"/>
</dbReference>
<dbReference type="GO" id="GO:0046872">
    <property type="term" value="F:metal ion binding"/>
    <property type="evidence" value="ECO:0007669"/>
    <property type="project" value="UniProtKB-KW"/>
</dbReference>
<dbReference type="GO" id="GO:0050661">
    <property type="term" value="F:NADP binding"/>
    <property type="evidence" value="ECO:0007669"/>
    <property type="project" value="InterPro"/>
</dbReference>
<dbReference type="GO" id="GO:0008942">
    <property type="term" value="F:nitrite reductase [NAD(P)H] activity"/>
    <property type="evidence" value="ECO:0007669"/>
    <property type="project" value="UniProtKB-EC"/>
</dbReference>
<dbReference type="GO" id="GO:0042128">
    <property type="term" value="P:nitrate assimilation"/>
    <property type="evidence" value="ECO:0007669"/>
    <property type="project" value="UniProtKB-UniPathway"/>
</dbReference>
<dbReference type="CDD" id="cd03529">
    <property type="entry name" value="Rieske_NirD"/>
    <property type="match status" value="1"/>
</dbReference>
<dbReference type="FunFam" id="3.30.413.10:FF:000007">
    <property type="entry name" value="Nitrite reductase [NAD(P)H] large subunit"/>
    <property type="match status" value="1"/>
</dbReference>
<dbReference type="FunFam" id="1.10.10.1100:FF:000002">
    <property type="entry name" value="Nitrite reductase large subunit"/>
    <property type="match status" value="1"/>
</dbReference>
<dbReference type="Gene3D" id="3.90.480.20">
    <property type="match status" value="1"/>
</dbReference>
<dbReference type="Gene3D" id="1.10.10.1100">
    <property type="entry name" value="BFD-like [2Fe-2S]-binding domain"/>
    <property type="match status" value="1"/>
</dbReference>
<dbReference type="Gene3D" id="3.50.50.60">
    <property type="entry name" value="FAD/NAD(P)-binding domain"/>
    <property type="match status" value="2"/>
</dbReference>
<dbReference type="Gene3D" id="2.102.10.10">
    <property type="entry name" value="Rieske [2Fe-2S] iron-sulphur domain"/>
    <property type="match status" value="1"/>
</dbReference>
<dbReference type="Gene3D" id="3.30.413.10">
    <property type="entry name" value="Sulfite Reductase Hemoprotein, domain 1"/>
    <property type="match status" value="1"/>
</dbReference>
<dbReference type="InterPro" id="IPR007419">
    <property type="entry name" value="BFD-like_2Fe2S-bd_dom"/>
</dbReference>
<dbReference type="InterPro" id="IPR041854">
    <property type="entry name" value="BFD-like_2Fe2S-bd_dom_sf"/>
</dbReference>
<dbReference type="InterPro" id="IPR036188">
    <property type="entry name" value="FAD/NAD-bd_sf"/>
</dbReference>
<dbReference type="InterPro" id="IPR023753">
    <property type="entry name" value="FAD/NAD-binding_dom"/>
</dbReference>
<dbReference type="InterPro" id="IPR052034">
    <property type="entry name" value="NasD-like"/>
</dbReference>
<dbReference type="InterPro" id="IPR005117">
    <property type="entry name" value="NiRdtase/SiRdtase_haem-b_fer"/>
</dbReference>
<dbReference type="InterPro" id="IPR036136">
    <property type="entry name" value="Nit/Sulf_reduc_fer-like_dom_sf"/>
</dbReference>
<dbReference type="InterPro" id="IPR012744">
    <property type="entry name" value="Nitri_red_NirB"/>
</dbReference>
<dbReference type="InterPro" id="IPR006067">
    <property type="entry name" value="NO2/SO3_Rdtase_4Fe4S_dom"/>
</dbReference>
<dbReference type="InterPro" id="IPR045854">
    <property type="entry name" value="NO2/SO3_Rdtase_4Fe4S_sf"/>
</dbReference>
<dbReference type="InterPro" id="IPR006066">
    <property type="entry name" value="NO2/SO3_Rdtase_FeS/sirohaem_BS"/>
</dbReference>
<dbReference type="InterPro" id="IPR012748">
    <property type="entry name" value="Rieske-like_NirD"/>
</dbReference>
<dbReference type="InterPro" id="IPR017941">
    <property type="entry name" value="Rieske_2Fe-2S"/>
</dbReference>
<dbReference type="InterPro" id="IPR036922">
    <property type="entry name" value="Rieske_2Fe-2S_sf"/>
</dbReference>
<dbReference type="NCBIfam" id="TIGR02374">
    <property type="entry name" value="nitri_red_nirB"/>
    <property type="match status" value="1"/>
</dbReference>
<dbReference type="NCBIfam" id="NF011565">
    <property type="entry name" value="PRK14989.1"/>
    <property type="match status" value="1"/>
</dbReference>
<dbReference type="PANTHER" id="PTHR43809">
    <property type="entry name" value="NITRITE REDUCTASE (NADH) LARGE SUBUNIT"/>
    <property type="match status" value="1"/>
</dbReference>
<dbReference type="PANTHER" id="PTHR43809:SF1">
    <property type="entry name" value="NITRITE REDUCTASE (NADH) LARGE SUBUNIT"/>
    <property type="match status" value="1"/>
</dbReference>
<dbReference type="Pfam" id="PF04324">
    <property type="entry name" value="Fer2_BFD"/>
    <property type="match status" value="1"/>
</dbReference>
<dbReference type="Pfam" id="PF01077">
    <property type="entry name" value="NIR_SIR"/>
    <property type="match status" value="1"/>
</dbReference>
<dbReference type="Pfam" id="PF03460">
    <property type="entry name" value="NIR_SIR_ferr"/>
    <property type="match status" value="1"/>
</dbReference>
<dbReference type="Pfam" id="PF07992">
    <property type="entry name" value="Pyr_redox_2"/>
    <property type="match status" value="1"/>
</dbReference>
<dbReference type="Pfam" id="PF00355">
    <property type="entry name" value="Rieske"/>
    <property type="match status" value="1"/>
</dbReference>
<dbReference type="PRINTS" id="PR00368">
    <property type="entry name" value="FADPNR"/>
</dbReference>
<dbReference type="PRINTS" id="PR00397">
    <property type="entry name" value="SIROHAEM"/>
</dbReference>
<dbReference type="SUPFAM" id="SSF51905">
    <property type="entry name" value="FAD/NAD(P)-binding domain"/>
    <property type="match status" value="1"/>
</dbReference>
<dbReference type="SUPFAM" id="SSF50022">
    <property type="entry name" value="ISP domain"/>
    <property type="match status" value="2"/>
</dbReference>
<dbReference type="SUPFAM" id="SSF56014">
    <property type="entry name" value="Nitrite and sulphite reductase 4Fe-4S domain-like"/>
    <property type="match status" value="1"/>
</dbReference>
<dbReference type="SUPFAM" id="SSF55124">
    <property type="entry name" value="Nitrite/Sulfite reductase N-terminal domain-like"/>
    <property type="match status" value="1"/>
</dbReference>
<dbReference type="PROSITE" id="PS00365">
    <property type="entry name" value="NIR_SIR"/>
    <property type="match status" value="1"/>
</dbReference>
<dbReference type="PROSITE" id="PS51296">
    <property type="entry name" value="RIESKE"/>
    <property type="match status" value="1"/>
</dbReference>
<reference key="1">
    <citation type="journal article" date="1993" name="J. Bacteriol.">
        <title>Molecular cloning, characterization, and nucleotide sequence of nit-6, the structural gene for nitrite reductase in Neurospora crassa.</title>
        <authorList>
            <person name="Exley G.E."/>
            <person name="Colandene J.D."/>
            <person name="Garrett R.H."/>
        </authorList>
    </citation>
    <scope>NUCLEOTIDE SEQUENCE [GENOMIC DNA]</scope>
    <source>
        <strain>ATCC 24698 / 74-OR23-1A / CBS 708.71 / DSM 1257 / FGSC 987</strain>
    </source>
</reference>
<reference key="2">
    <citation type="journal article" date="2003" name="Nature">
        <title>The genome sequence of the filamentous fungus Neurospora crassa.</title>
        <authorList>
            <person name="Galagan J.E."/>
            <person name="Calvo S.E."/>
            <person name="Borkovich K.A."/>
            <person name="Selker E.U."/>
            <person name="Read N.D."/>
            <person name="Jaffe D.B."/>
            <person name="FitzHugh W."/>
            <person name="Ma L.-J."/>
            <person name="Smirnov S."/>
            <person name="Purcell S."/>
            <person name="Rehman B."/>
            <person name="Elkins T."/>
            <person name="Engels R."/>
            <person name="Wang S."/>
            <person name="Nielsen C.B."/>
            <person name="Butler J."/>
            <person name="Endrizzi M."/>
            <person name="Qui D."/>
            <person name="Ianakiev P."/>
            <person name="Bell-Pedersen D."/>
            <person name="Nelson M.A."/>
            <person name="Werner-Washburne M."/>
            <person name="Selitrennikoff C.P."/>
            <person name="Kinsey J.A."/>
            <person name="Braun E.L."/>
            <person name="Zelter A."/>
            <person name="Schulte U."/>
            <person name="Kothe G.O."/>
            <person name="Jedd G."/>
            <person name="Mewes H.-W."/>
            <person name="Staben C."/>
            <person name="Marcotte E."/>
            <person name="Greenberg D."/>
            <person name="Roy A."/>
            <person name="Foley K."/>
            <person name="Naylor J."/>
            <person name="Stange-Thomann N."/>
            <person name="Barrett R."/>
            <person name="Gnerre S."/>
            <person name="Kamal M."/>
            <person name="Kamvysselis M."/>
            <person name="Mauceli E.W."/>
            <person name="Bielke C."/>
            <person name="Rudd S."/>
            <person name="Frishman D."/>
            <person name="Krystofova S."/>
            <person name="Rasmussen C."/>
            <person name="Metzenberg R.L."/>
            <person name="Perkins D.D."/>
            <person name="Kroken S."/>
            <person name="Cogoni C."/>
            <person name="Macino G."/>
            <person name="Catcheside D.E.A."/>
            <person name="Li W."/>
            <person name="Pratt R.J."/>
            <person name="Osmani S.A."/>
            <person name="DeSouza C.P.C."/>
            <person name="Glass N.L."/>
            <person name="Orbach M.J."/>
            <person name="Berglund J.A."/>
            <person name="Voelker R."/>
            <person name="Yarden O."/>
            <person name="Plamann M."/>
            <person name="Seiler S."/>
            <person name="Dunlap J.C."/>
            <person name="Radford A."/>
            <person name="Aramayo R."/>
            <person name="Natvig D.O."/>
            <person name="Alex L.A."/>
            <person name="Mannhaupt G."/>
            <person name="Ebbole D.J."/>
            <person name="Freitag M."/>
            <person name="Paulsen I."/>
            <person name="Sachs M.S."/>
            <person name="Lander E.S."/>
            <person name="Nusbaum C."/>
            <person name="Birren B.W."/>
        </authorList>
    </citation>
    <scope>NUCLEOTIDE SEQUENCE [LARGE SCALE GENOMIC DNA]</scope>
    <source>
        <strain>ATCC 24698 / 74-OR23-1A / CBS 708.71 / DSM 1257 / FGSC 987</strain>
    </source>
</reference>
<evidence type="ECO:0000250" key="1"/>
<evidence type="ECO:0000250" key="2">
    <source>
        <dbReference type="UniProtKB" id="P05340"/>
    </source>
</evidence>
<evidence type="ECO:0000255" key="3"/>
<evidence type="ECO:0000255" key="4">
    <source>
        <dbReference type="PROSITE-ProRule" id="PRU00628"/>
    </source>
</evidence>
<evidence type="ECO:0000256" key="5">
    <source>
        <dbReference type="SAM" id="MobiDB-lite"/>
    </source>
</evidence>
<evidence type="ECO:0000305" key="6"/>
<name>NIR_NEUCR</name>
<accession>P38681</accession>
<accession>Q7RVB5</accession>
<keyword id="KW-0001">2Fe-2S</keyword>
<keyword id="KW-0004">4Fe-4S</keyword>
<keyword id="KW-0274">FAD</keyword>
<keyword id="KW-0285">Flavoprotein</keyword>
<keyword id="KW-0349">Heme</keyword>
<keyword id="KW-0408">Iron</keyword>
<keyword id="KW-0411">Iron-sulfur</keyword>
<keyword id="KW-0479">Metal-binding</keyword>
<keyword id="KW-0521">NADP</keyword>
<keyword id="KW-0534">Nitrate assimilation</keyword>
<keyword id="KW-0560">Oxidoreductase</keyword>
<keyword id="KW-1185">Reference proteome</keyword>
<organism>
    <name type="scientific">Neurospora crassa (strain ATCC 24698 / 74-OR23-1A / CBS 708.71 / DSM 1257 / FGSC 987)</name>
    <dbReference type="NCBI Taxonomy" id="367110"/>
    <lineage>
        <taxon>Eukaryota</taxon>
        <taxon>Fungi</taxon>
        <taxon>Dikarya</taxon>
        <taxon>Ascomycota</taxon>
        <taxon>Pezizomycotina</taxon>
        <taxon>Sordariomycetes</taxon>
        <taxon>Sordariomycetidae</taxon>
        <taxon>Sordariales</taxon>
        <taxon>Sordariaceae</taxon>
        <taxon>Neurospora</taxon>
    </lineage>
</organism>
<comment type="catalytic activity">
    <reaction>
        <text>NH4(+) + 3 NADP(+) + 2 H2O = nitrite + 3 NADPH + 5 H(+)</text>
        <dbReference type="Rhea" id="RHEA:24632"/>
        <dbReference type="ChEBI" id="CHEBI:15377"/>
        <dbReference type="ChEBI" id="CHEBI:15378"/>
        <dbReference type="ChEBI" id="CHEBI:16301"/>
        <dbReference type="ChEBI" id="CHEBI:28938"/>
        <dbReference type="ChEBI" id="CHEBI:57783"/>
        <dbReference type="ChEBI" id="CHEBI:58349"/>
        <dbReference type="EC" id="1.7.1.4"/>
    </reaction>
</comment>
<comment type="catalytic activity">
    <reaction>
        <text>NH4(+) + 3 NAD(+) + 2 H2O = nitrite + 3 NADH + 5 H(+)</text>
        <dbReference type="Rhea" id="RHEA:24628"/>
        <dbReference type="ChEBI" id="CHEBI:15377"/>
        <dbReference type="ChEBI" id="CHEBI:15378"/>
        <dbReference type="ChEBI" id="CHEBI:16301"/>
        <dbReference type="ChEBI" id="CHEBI:28938"/>
        <dbReference type="ChEBI" id="CHEBI:57540"/>
        <dbReference type="ChEBI" id="CHEBI:57945"/>
        <dbReference type="EC" id="1.7.1.4"/>
    </reaction>
</comment>
<comment type="cofactor">
    <cofactor>
        <name>siroheme</name>
        <dbReference type="ChEBI" id="CHEBI:60052"/>
    </cofactor>
    <text>Binds 1 siroheme per subunit.</text>
</comment>
<comment type="cofactor">
    <cofactor>
        <name>[4Fe-4S] cluster</name>
        <dbReference type="ChEBI" id="CHEBI:49883"/>
    </cofactor>
    <text>Binds 1 [4Fe-4S] cluster per subunit.</text>
</comment>
<comment type="cofactor">
    <cofactor>
        <name>FAD</name>
        <dbReference type="ChEBI" id="CHEBI:57692"/>
    </cofactor>
</comment>
<comment type="cofactor">
    <cofactor evidence="2 4">
        <name>[2Fe-2S] cluster</name>
        <dbReference type="ChEBI" id="CHEBI:190135"/>
    </cofactor>
    <text evidence="2 4">Binds 2 [2Fe-2S] clusters per subunit.</text>
</comment>
<comment type="pathway">
    <text>Nitrogen metabolism; nitrate reduction (assimilation).</text>
</comment>
<comment type="subunit">
    <text evidence="1">Homodimer.</text>
</comment>
<comment type="induction">
    <text>By nitrate.</text>
</comment>
<comment type="similarity">
    <text evidence="6">Belongs to the nitrite and sulfite reductase 4Fe-4S domain family.</text>
</comment>